<reference key="1">
    <citation type="submission" date="1999-01" db="EMBL/GenBank/DDBJ databases">
        <authorList>
            <person name="Taniguchi K."/>
        </authorList>
    </citation>
    <scope>NUCLEOTIDE SEQUENCE [MRNA]</scope>
</reference>
<reference key="2">
    <citation type="journal article" date="1998" name="J. Med. Virol.">
        <title>Serological and genomic characterization of human rotaviruses detected in China.</title>
        <authorList>
            <person name="Wu H."/>
            <person name="Taniguchi K."/>
            <person name="Urasawa T."/>
            <person name="Urasawa S."/>
        </authorList>
    </citation>
    <scope>NUCLEOTIDE SEQUENCE [MRNA]</scope>
</reference>
<reference key="3">
    <citation type="journal article" date="2018" name="J. Virol.">
        <title>Rotavirus Induces Formation of Remodeled Stress Granules and P Bodies and Their Sequestration in Viroplasms To Promote Progeny Virus Production.</title>
        <authorList>
            <person name="Dhillon P."/>
            <person name="Rao C.D."/>
        </authorList>
    </citation>
    <scope>FUNCTION</scope>
</reference>
<feature type="chain" id="PRO_0000369501" description="Non-structural protein 5">
    <location>
        <begin position="1"/>
        <end position="197"/>
    </location>
</feature>
<feature type="region of interest" description="Disordered" evidence="2">
    <location>
        <begin position="16"/>
        <end position="36"/>
    </location>
</feature>
<feature type="region of interest" description="Disordered" evidence="2">
    <location>
        <begin position="85"/>
        <end position="106"/>
    </location>
</feature>
<feature type="region of interest" description="Disordered" evidence="2">
    <location>
        <begin position="129"/>
        <end position="167"/>
    </location>
</feature>
<feature type="compositionally biased region" description="Low complexity" evidence="2">
    <location>
        <begin position="16"/>
        <end position="30"/>
    </location>
</feature>
<feature type="compositionally biased region" description="Polar residues" evidence="2">
    <location>
        <begin position="91"/>
        <end position="104"/>
    </location>
</feature>
<feature type="compositionally biased region" description="Acidic residues" evidence="2">
    <location>
        <begin position="152"/>
        <end position="165"/>
    </location>
</feature>
<feature type="binding site" evidence="1">
    <location>
        <position position="92"/>
    </location>
    <ligand>
        <name>Mg(2+)</name>
        <dbReference type="ChEBI" id="CHEBI:18420"/>
    </ligand>
</feature>
<feature type="modified residue" description="Phosphoserine; by host CK1" evidence="1">
    <location>
        <position position="67"/>
    </location>
</feature>
<feature type="modified residue" description="Phosphoserine; by host" evidence="1">
    <location>
        <position position="153"/>
    </location>
</feature>
<feature type="modified residue" description="Phosphoserine; by host" evidence="1">
    <location>
        <position position="155"/>
    </location>
</feature>
<feature type="modified residue" description="Phosphoserine; by host" evidence="1">
    <location>
        <position position="163"/>
    </location>
</feature>
<feature type="modified residue" description="Phosphoserine; by host" evidence="1">
    <location>
        <position position="165"/>
    </location>
</feature>
<protein>
    <recommendedName>
        <fullName evidence="1">Non-structural protein 5</fullName>
        <shortName evidence="1">NSP5</shortName>
    </recommendedName>
    <alternativeName>
        <fullName evidence="1">NS26</fullName>
    </alternativeName>
</protein>
<accession>Q9QNA5</accession>
<organism>
    <name type="scientific">Rotavirus A (strain RVA/Human/Japan/KU/1995/G1P1A[8])</name>
    <name type="common">RV-A</name>
    <dbReference type="NCBI Taxonomy" id="10952"/>
    <lineage>
        <taxon>Viruses</taxon>
        <taxon>Riboviria</taxon>
        <taxon>Orthornavirae</taxon>
        <taxon>Duplornaviricota</taxon>
        <taxon>Resentoviricetes</taxon>
        <taxon>Reovirales</taxon>
        <taxon>Sedoreoviridae</taxon>
        <taxon>Rotavirus</taxon>
        <taxon>Rotavirus A</taxon>
    </lineage>
</organism>
<evidence type="ECO:0000255" key="1">
    <source>
        <dbReference type="HAMAP-Rule" id="MF_04092"/>
    </source>
</evidence>
<evidence type="ECO:0000256" key="2">
    <source>
        <dbReference type="SAM" id="MobiDB-lite"/>
    </source>
</evidence>
<evidence type="ECO:0000269" key="3">
    <source>
    </source>
</evidence>
<name>NSP5_ROTHK</name>
<proteinExistence type="evidence at transcript level"/>
<sequence length="197" mass="21595">MSLSIDVTSLPSISSSIFKNESSSTTSTLSGKSIGRNEQYVSPDIDAFNKYMLSKSPEDIGPSDSASNDPLTSFSIRSNAVKTNADAGVSMDSSTQSRPSSNVGCDQMDFSLNKGINVSASLDSCVSISTNQKKEKSKKDKSRKHYPRIEADSDSEDYVLDDSDSDDGKCKNCKYKKKYFALRMRMKQVAMQLIEDL</sequence>
<keyword id="KW-0325">Glycoprotein</keyword>
<keyword id="KW-1035">Host cytoplasm</keyword>
<keyword id="KW-0945">Host-virus interaction</keyword>
<keyword id="KW-0460">Magnesium</keyword>
<keyword id="KW-0479">Metal-binding</keyword>
<keyword id="KW-0547">Nucleotide-binding</keyword>
<keyword id="KW-0597">Phosphoprotein</keyword>
<keyword id="KW-0694">RNA-binding</keyword>
<comment type="function">
    <text evidence="1 3">Plays an essential role in the viral genome replication. Participates, together with NSP2, in the formation of viral factories (viroplasms), which are large inclusions in the host cytoplasm where replication intermediates are assembled and viral RNA replication takes place. Orchestrates the recruitment of viroplasmic proteins such as capsid proteins to these factories (By similarity). Participates in the selective exclusion of host proteins from stress granules (SG) and P bodies (PB) (PubMed:30258011). Also participates in the sequestration of these remodeled organelles in viral factories (PubMed:30258011).</text>
</comment>
<comment type="cofactor">
    <cofactor evidence="1">
        <name>Mg(2+)</name>
        <dbReference type="ChEBI" id="CHEBI:18420"/>
    </cofactor>
</comment>
<comment type="subunit">
    <text evidence="1 3">Homodimer. Interacts with VP1. Interacts with VP2. Interacts with NSP2; this interaction leads to up-regulation of NSP5 hyperphosphorylation and formation of virus factories. Interacts with NSP6. Interacts with host DCP1A, DCP1B, DDX6, EDC4, EIF2S1/eIF2-alpha, AGO2 and CAPRIN1; these interactions are probably part of the sequestration of some host SGs and PBs proteins in viral factories.</text>
</comment>
<comment type="subcellular location">
    <subcellularLocation>
        <location evidence="1">Host cytoplasm</location>
    </subcellularLocation>
    <text evidence="1">Found in spherical cytoplasmic structures, called virus factories, that appear early after infection and are the site of viral replication and packaging.</text>
</comment>
<comment type="PTM">
    <text evidence="1">O-glycosylated.</text>
</comment>
<comment type="PTM">
    <text evidence="1">Hyperphosphorylated on serine residues, when in dimeric form. Phosphorylation by host CK1 is required for the hyperphosphorylation of NSP5 dimer.</text>
</comment>
<comment type="similarity">
    <text evidence="1">Belongs to the rotavirus NSP5 family.</text>
</comment>
<dbReference type="EMBL" id="AB022773">
    <property type="protein sequence ID" value="BAA84970.1"/>
    <property type="molecule type" value="mRNA"/>
</dbReference>
<dbReference type="EMBL" id="AB008661">
    <property type="protein sequence ID" value="BAB83818.1"/>
    <property type="molecule type" value="mRNA"/>
</dbReference>
<dbReference type="SMR" id="Q9QNA5"/>
<dbReference type="Proteomes" id="UP000001458">
    <property type="component" value="Genome"/>
</dbReference>
<dbReference type="GO" id="GO:0030430">
    <property type="term" value="C:host cell cytoplasm"/>
    <property type="evidence" value="ECO:0007669"/>
    <property type="project" value="UniProtKB-SubCell"/>
</dbReference>
<dbReference type="GO" id="GO:0016887">
    <property type="term" value="F:ATP hydrolysis activity"/>
    <property type="evidence" value="ECO:0007669"/>
    <property type="project" value="UniProtKB-UniRule"/>
</dbReference>
<dbReference type="GO" id="GO:0000287">
    <property type="term" value="F:magnesium ion binding"/>
    <property type="evidence" value="ECO:0007669"/>
    <property type="project" value="UniProtKB-UniRule"/>
</dbReference>
<dbReference type="GO" id="GO:0000166">
    <property type="term" value="F:nucleotide binding"/>
    <property type="evidence" value="ECO:0007669"/>
    <property type="project" value="UniProtKB-UniRule"/>
</dbReference>
<dbReference type="GO" id="GO:0003723">
    <property type="term" value="F:RNA binding"/>
    <property type="evidence" value="ECO:0007669"/>
    <property type="project" value="UniProtKB-UniRule"/>
</dbReference>
<dbReference type="GO" id="GO:0019079">
    <property type="term" value="P:viral genome replication"/>
    <property type="evidence" value="ECO:0007669"/>
    <property type="project" value="UniProtKB-UniRule"/>
</dbReference>
<dbReference type="HAMAP" id="MF_04092">
    <property type="entry name" value="ROTA_NSP5"/>
    <property type="match status" value="1"/>
</dbReference>
<dbReference type="InterPro" id="IPR002512">
    <property type="entry name" value="Rotavirus_A/C_NSP5"/>
</dbReference>
<dbReference type="Pfam" id="PF01525">
    <property type="entry name" value="Rota_NS26"/>
    <property type="match status" value="2"/>
</dbReference>
<dbReference type="PIRSF" id="PIRSF004006">
    <property type="entry name" value="Rota_NS26"/>
    <property type="match status" value="1"/>
</dbReference>
<organismHost>
    <name type="scientific">Homo sapiens</name>
    <name type="common">Human</name>
    <dbReference type="NCBI Taxonomy" id="9606"/>
</organismHost>